<name>DCUP_CHLCH</name>
<comment type="function">
    <text evidence="1">Catalyzes the decarboxylation of four acetate groups of uroporphyrinogen-III to yield coproporphyrinogen-III.</text>
</comment>
<comment type="catalytic activity">
    <reaction evidence="1">
        <text>uroporphyrinogen III + 4 H(+) = coproporphyrinogen III + 4 CO2</text>
        <dbReference type="Rhea" id="RHEA:19865"/>
        <dbReference type="ChEBI" id="CHEBI:15378"/>
        <dbReference type="ChEBI" id="CHEBI:16526"/>
        <dbReference type="ChEBI" id="CHEBI:57308"/>
        <dbReference type="ChEBI" id="CHEBI:57309"/>
        <dbReference type="EC" id="4.1.1.37"/>
    </reaction>
</comment>
<comment type="pathway">
    <text evidence="1">Porphyrin-containing compound metabolism; protoporphyrin-IX biosynthesis; coproporphyrinogen-III from 5-aminolevulinate: step 4/4.</text>
</comment>
<comment type="subunit">
    <text evidence="1">Homodimer.</text>
</comment>
<comment type="subcellular location">
    <subcellularLocation>
        <location evidence="1">Cytoplasm</location>
    </subcellularLocation>
</comment>
<comment type="similarity">
    <text evidence="1">Belongs to the uroporphyrinogen decarboxylase family.</text>
</comment>
<organism>
    <name type="scientific">Chlorobium chlorochromatii (strain CaD3)</name>
    <dbReference type="NCBI Taxonomy" id="340177"/>
    <lineage>
        <taxon>Bacteria</taxon>
        <taxon>Pseudomonadati</taxon>
        <taxon>Chlorobiota</taxon>
        <taxon>Chlorobiia</taxon>
        <taxon>Chlorobiales</taxon>
        <taxon>Chlorobiaceae</taxon>
        <taxon>Chlorobium/Pelodictyon group</taxon>
        <taxon>Chlorobium</taxon>
    </lineage>
</organism>
<proteinExistence type="inferred from homology"/>
<reference key="1">
    <citation type="submission" date="2005-08" db="EMBL/GenBank/DDBJ databases">
        <title>Complete sequence of Chlorobium chlorochromatii CaD3.</title>
        <authorList>
            <consortium name="US DOE Joint Genome Institute"/>
            <person name="Copeland A."/>
            <person name="Lucas S."/>
            <person name="Lapidus A."/>
            <person name="Barry K."/>
            <person name="Detter J.C."/>
            <person name="Glavina T."/>
            <person name="Hammon N."/>
            <person name="Israni S."/>
            <person name="Pitluck S."/>
            <person name="Bryant D."/>
            <person name="Schmutz J."/>
            <person name="Larimer F."/>
            <person name="Land M."/>
            <person name="Kyrpides N."/>
            <person name="Ivanova N."/>
            <person name="Richardson P."/>
        </authorList>
    </citation>
    <scope>NUCLEOTIDE SEQUENCE [LARGE SCALE GENOMIC DNA]</scope>
    <source>
        <strain>CaD3</strain>
    </source>
</reference>
<feature type="chain" id="PRO_1000023895" description="Uroporphyrinogen decarboxylase">
    <location>
        <begin position="1"/>
        <end position="351"/>
    </location>
</feature>
<feature type="binding site" evidence="1">
    <location>
        <begin position="25"/>
        <end position="29"/>
    </location>
    <ligand>
        <name>substrate</name>
    </ligand>
</feature>
<feature type="binding site" evidence="1">
    <location>
        <position position="74"/>
    </location>
    <ligand>
        <name>substrate</name>
    </ligand>
</feature>
<feature type="binding site" evidence="1">
    <location>
        <position position="151"/>
    </location>
    <ligand>
        <name>substrate</name>
    </ligand>
</feature>
<feature type="binding site" evidence="1">
    <location>
        <position position="206"/>
    </location>
    <ligand>
        <name>substrate</name>
    </ligand>
</feature>
<feature type="binding site" evidence="1">
    <location>
        <position position="325"/>
    </location>
    <ligand>
        <name>substrate</name>
    </ligand>
</feature>
<feature type="site" description="Transition state stabilizer" evidence="1">
    <location>
        <position position="74"/>
    </location>
</feature>
<dbReference type="EC" id="4.1.1.37" evidence="1"/>
<dbReference type="EMBL" id="CP000108">
    <property type="protein sequence ID" value="ABB27408.1"/>
    <property type="molecule type" value="Genomic_DNA"/>
</dbReference>
<dbReference type="SMR" id="Q3AUB7"/>
<dbReference type="STRING" id="340177.Cag_0130"/>
<dbReference type="KEGG" id="cch:Cag_0130"/>
<dbReference type="eggNOG" id="COG0407">
    <property type="taxonomic scope" value="Bacteria"/>
</dbReference>
<dbReference type="HOGENOM" id="CLU_040933_0_0_10"/>
<dbReference type="OrthoDB" id="9806656at2"/>
<dbReference type="UniPathway" id="UPA00251">
    <property type="reaction ID" value="UER00321"/>
</dbReference>
<dbReference type="GO" id="GO:0005829">
    <property type="term" value="C:cytosol"/>
    <property type="evidence" value="ECO:0007669"/>
    <property type="project" value="TreeGrafter"/>
</dbReference>
<dbReference type="GO" id="GO:0004853">
    <property type="term" value="F:uroporphyrinogen decarboxylase activity"/>
    <property type="evidence" value="ECO:0007669"/>
    <property type="project" value="UniProtKB-UniRule"/>
</dbReference>
<dbReference type="GO" id="GO:0006782">
    <property type="term" value="P:protoporphyrinogen IX biosynthetic process"/>
    <property type="evidence" value="ECO:0007669"/>
    <property type="project" value="UniProtKB-UniRule"/>
</dbReference>
<dbReference type="CDD" id="cd00717">
    <property type="entry name" value="URO-D"/>
    <property type="match status" value="1"/>
</dbReference>
<dbReference type="FunFam" id="3.20.20.210:FF:000001">
    <property type="entry name" value="Uroporphyrinogen decarboxylase"/>
    <property type="match status" value="1"/>
</dbReference>
<dbReference type="Gene3D" id="3.20.20.210">
    <property type="match status" value="1"/>
</dbReference>
<dbReference type="HAMAP" id="MF_00218">
    <property type="entry name" value="URO_D"/>
    <property type="match status" value="1"/>
</dbReference>
<dbReference type="InterPro" id="IPR038071">
    <property type="entry name" value="UROD/MetE-like_sf"/>
</dbReference>
<dbReference type="InterPro" id="IPR006361">
    <property type="entry name" value="Uroporphyrinogen_deCO2ase_HemE"/>
</dbReference>
<dbReference type="InterPro" id="IPR000257">
    <property type="entry name" value="Uroporphyrinogen_deCOase"/>
</dbReference>
<dbReference type="NCBIfam" id="TIGR01464">
    <property type="entry name" value="hemE"/>
    <property type="match status" value="1"/>
</dbReference>
<dbReference type="PANTHER" id="PTHR21091">
    <property type="entry name" value="METHYLTETRAHYDROFOLATE:HOMOCYSTEINE METHYLTRANSFERASE RELATED"/>
    <property type="match status" value="1"/>
</dbReference>
<dbReference type="PANTHER" id="PTHR21091:SF169">
    <property type="entry name" value="UROPORPHYRINOGEN DECARBOXYLASE"/>
    <property type="match status" value="1"/>
</dbReference>
<dbReference type="Pfam" id="PF01208">
    <property type="entry name" value="URO-D"/>
    <property type="match status" value="1"/>
</dbReference>
<dbReference type="SUPFAM" id="SSF51726">
    <property type="entry name" value="UROD/MetE-like"/>
    <property type="match status" value="1"/>
</dbReference>
<dbReference type="PROSITE" id="PS00906">
    <property type="entry name" value="UROD_1"/>
    <property type="match status" value="1"/>
</dbReference>
<dbReference type="PROSITE" id="PS00907">
    <property type="entry name" value="UROD_2"/>
    <property type="match status" value="1"/>
</dbReference>
<accession>Q3AUB7</accession>
<sequence length="351" mass="39185">MLKNDLFLRALKRQPCSRTPIWVMRQAGRYLPEYRAVREKTDFLTLCKTPELATEVTIQPVELVGVDAAIIFSDILVVNEAMGQEVNIIETKGIKLAPPIRSQADIDKLIVPDIDEKLGYVLDALRMTKKELDNRVPLIGFSGAAWTLFTYAVEGGGSKNYAYAKQMMYREPQMAHSLLSKISQTITAYTLKQIEAGADAIQIFDSWASALSEDDYREYALPYIKDTVQAIKAKHPETPVIVFSKDCNTILSDIADTGCDAVGLGWGIDISKARTELNDRVALQGNLDPTVLYGTQERIKIEAGKILKSFGQHNHHSGHVFNLGHGILPDMDPDNLRCLVEFVKEESAKYH</sequence>
<evidence type="ECO:0000255" key="1">
    <source>
        <dbReference type="HAMAP-Rule" id="MF_00218"/>
    </source>
</evidence>
<gene>
    <name evidence="1" type="primary">hemE</name>
    <name type="ordered locus">Cag_0130</name>
</gene>
<protein>
    <recommendedName>
        <fullName evidence="1">Uroporphyrinogen decarboxylase</fullName>
        <shortName evidence="1">UPD</shortName>
        <shortName evidence="1">URO-D</shortName>
        <ecNumber evidence="1">4.1.1.37</ecNumber>
    </recommendedName>
</protein>
<keyword id="KW-0963">Cytoplasm</keyword>
<keyword id="KW-0210">Decarboxylase</keyword>
<keyword id="KW-0456">Lyase</keyword>
<keyword id="KW-0627">Porphyrin biosynthesis</keyword>